<protein>
    <recommendedName>
        <fullName evidence="1">Nucleoside diphosphate kinase</fullName>
        <shortName evidence="1">NDK</shortName>
        <shortName evidence="1">NDP kinase</shortName>
        <ecNumber evidence="1">2.7.4.6</ecNumber>
    </recommendedName>
    <alternativeName>
        <fullName evidence="1">Nucleoside-2-P kinase</fullName>
    </alternativeName>
</protein>
<reference key="1">
    <citation type="journal article" date="1990" name="J. Biol. Chem.">
        <title>Nucleoside diphosphate kinase from Myxococcus xanthus. I. Cloning and sequencing of the gene.</title>
        <authorList>
            <person name="Munoz-Dorado J."/>
            <person name="Inouye M."/>
            <person name="Inouye S."/>
        </authorList>
    </citation>
    <scope>NUCLEOTIDE SEQUENCE [GENOMIC DNA]</scope>
    <scope>PROTEIN SEQUENCE OF 2-21</scope>
    <source>
        <strain>FB / DZF1</strain>
    </source>
</reference>
<reference key="2">
    <citation type="journal article" date="1990" name="J. Biol. Chem.">
        <title>Nucleoside diphosphate kinase from Myxococcus xanthus. II. Biochemical characterization.</title>
        <authorList>
            <person name="Munoz-Dorado J."/>
            <person name="Inouye M."/>
            <person name="Inouye S."/>
        </authorList>
    </citation>
    <scope>CHARACTERIZATION</scope>
</reference>
<reference key="3">
    <citation type="journal article" date="1993" name="J. Mol. Biol.">
        <title>Crystal structure of Myxococcus xanthus nucleoside diphosphate kinase and its interaction with a nucleotide substrate at 2.0-A resolution.</title>
        <authorList>
            <person name="Williams R.L."/>
            <person name="Oren D.A."/>
            <person name="Munoz-Dorado J."/>
            <person name="Inouye S."/>
            <person name="Inouye M."/>
            <person name="Arnold E."/>
        </authorList>
    </citation>
    <scope>X-RAY CRYSTALLOGRAPHY (2.0 ANGSTROMS) IN COMPLEX WITH SUBSTRATE</scope>
</reference>
<name>NDK_MYXXA</name>
<feature type="initiator methionine" description="Removed" evidence="2">
    <location>
        <position position="1"/>
    </location>
</feature>
<feature type="chain" id="PRO_0000137011" description="Nucleoside diphosphate kinase">
    <location>
        <begin position="2"/>
        <end position="145"/>
    </location>
</feature>
<feature type="active site" description="Pros-phosphohistidine intermediate" evidence="1">
    <location>
        <position position="117"/>
    </location>
</feature>
<feature type="binding site" evidence="1">
    <location>
        <position position="11"/>
    </location>
    <ligand>
        <name>ATP</name>
        <dbReference type="ChEBI" id="CHEBI:30616"/>
    </ligand>
</feature>
<feature type="binding site" evidence="1">
    <location>
        <position position="59"/>
    </location>
    <ligand>
        <name>ATP</name>
        <dbReference type="ChEBI" id="CHEBI:30616"/>
    </ligand>
</feature>
<feature type="binding site" evidence="1">
    <location>
        <position position="87"/>
    </location>
    <ligand>
        <name>ATP</name>
        <dbReference type="ChEBI" id="CHEBI:30616"/>
    </ligand>
</feature>
<feature type="binding site" evidence="1">
    <location>
        <position position="93"/>
    </location>
    <ligand>
        <name>ATP</name>
        <dbReference type="ChEBI" id="CHEBI:30616"/>
    </ligand>
</feature>
<feature type="binding site" evidence="1">
    <location>
        <position position="104"/>
    </location>
    <ligand>
        <name>ATP</name>
        <dbReference type="ChEBI" id="CHEBI:30616"/>
    </ligand>
</feature>
<feature type="binding site" evidence="1">
    <location>
        <position position="114"/>
    </location>
    <ligand>
        <name>ATP</name>
        <dbReference type="ChEBI" id="CHEBI:30616"/>
    </ligand>
</feature>
<feature type="strand" evidence="5">
    <location>
        <begin position="3"/>
        <end position="10"/>
    </location>
</feature>
<feature type="helix" evidence="5">
    <location>
        <begin position="12"/>
        <end position="16"/>
    </location>
</feature>
<feature type="helix" evidence="5">
    <location>
        <begin position="20"/>
        <end position="29"/>
    </location>
</feature>
<feature type="strand" evidence="5">
    <location>
        <begin position="33"/>
        <end position="40"/>
    </location>
</feature>
<feature type="helix" evidence="5">
    <location>
        <begin position="44"/>
        <end position="50"/>
    </location>
</feature>
<feature type="helix" evidence="5">
    <location>
        <begin position="52"/>
        <end position="54"/>
    </location>
</feature>
<feature type="helix" evidence="5">
    <location>
        <begin position="60"/>
        <end position="67"/>
    </location>
</feature>
<feature type="strand" evidence="5">
    <location>
        <begin position="72"/>
        <end position="80"/>
    </location>
</feature>
<feature type="helix" evidence="5">
    <location>
        <begin position="82"/>
        <end position="90"/>
    </location>
</feature>
<feature type="helix" evidence="5">
    <location>
        <begin position="95"/>
        <end position="97"/>
    </location>
</feature>
<feature type="helix" evidence="5">
    <location>
        <begin position="103"/>
        <end position="107"/>
    </location>
</feature>
<feature type="strand" evidence="5">
    <location>
        <begin position="110"/>
        <end position="113"/>
    </location>
</feature>
<feature type="strand" evidence="5">
    <location>
        <begin position="115"/>
        <end position="118"/>
    </location>
</feature>
<feature type="helix" evidence="5">
    <location>
        <begin position="122"/>
        <end position="132"/>
    </location>
</feature>
<feature type="helix" evidence="5">
    <location>
        <begin position="135"/>
        <end position="137"/>
    </location>
</feature>
<proteinExistence type="evidence at protein level"/>
<organism>
    <name type="scientific">Myxococcus xanthus</name>
    <dbReference type="NCBI Taxonomy" id="34"/>
    <lineage>
        <taxon>Bacteria</taxon>
        <taxon>Pseudomonadati</taxon>
        <taxon>Myxococcota</taxon>
        <taxon>Myxococcia</taxon>
        <taxon>Myxococcales</taxon>
        <taxon>Cystobacterineae</taxon>
        <taxon>Myxococcaceae</taxon>
        <taxon>Myxococcus</taxon>
    </lineage>
</organism>
<keyword id="KW-0002">3D-structure</keyword>
<keyword id="KW-0067">ATP-binding</keyword>
<keyword id="KW-0963">Cytoplasm</keyword>
<keyword id="KW-0903">Direct protein sequencing</keyword>
<keyword id="KW-0418">Kinase</keyword>
<keyword id="KW-0460">Magnesium</keyword>
<keyword id="KW-0479">Metal-binding</keyword>
<keyword id="KW-0546">Nucleotide metabolism</keyword>
<keyword id="KW-0547">Nucleotide-binding</keyword>
<keyword id="KW-0597">Phosphoprotein</keyword>
<keyword id="KW-0808">Transferase</keyword>
<sequence>MAIERTLSIIKPDGLEKGVIGKIISRFEEKGLKPVAIRLQHLSQAQAEGFYAVHKARPFFKDLVQFMISGPVVLMVLEGENAVLANRDIMGATNPAQAAEGTIRKDFATSIDKNTVHGSDSLENAKIEIAYFFRETEIHSYPYQK</sequence>
<gene>
    <name evidence="1" type="primary">ndk</name>
</gene>
<accession>P15266</accession>
<dbReference type="EC" id="2.7.4.6" evidence="1"/>
<dbReference type="EMBL" id="J05207">
    <property type="protein sequence ID" value="AAA25400.1"/>
    <property type="molecule type" value="Genomic_DNA"/>
</dbReference>
<dbReference type="PIR" id="A35539">
    <property type="entry name" value="A35539"/>
</dbReference>
<dbReference type="RefSeq" id="WP_011553572.1">
    <property type="nucleotide sequence ID" value="NZ_JABFNT010000005.1"/>
</dbReference>
<dbReference type="PDB" id="1NHK">
    <property type="method" value="X-ray"/>
    <property type="resolution" value="1.90 A"/>
    <property type="chains" value="L/R=2-145"/>
</dbReference>
<dbReference type="PDB" id="1NLK">
    <property type="method" value="X-ray"/>
    <property type="resolution" value="2.00 A"/>
    <property type="chains" value="L/R=2-145"/>
</dbReference>
<dbReference type="PDB" id="2NCK">
    <property type="method" value="X-ray"/>
    <property type="resolution" value="2.00 A"/>
    <property type="chains" value="L/R=2-145"/>
</dbReference>
<dbReference type="PDBsum" id="1NHK"/>
<dbReference type="PDBsum" id="1NLK"/>
<dbReference type="PDBsum" id="2NCK"/>
<dbReference type="SMR" id="P15266"/>
<dbReference type="GeneID" id="41360888"/>
<dbReference type="OMA" id="QHYGEHK"/>
<dbReference type="EvolutionaryTrace" id="P15266"/>
<dbReference type="GO" id="GO:0005737">
    <property type="term" value="C:cytoplasm"/>
    <property type="evidence" value="ECO:0007669"/>
    <property type="project" value="UniProtKB-SubCell"/>
</dbReference>
<dbReference type="GO" id="GO:0005524">
    <property type="term" value="F:ATP binding"/>
    <property type="evidence" value="ECO:0007669"/>
    <property type="project" value="UniProtKB-UniRule"/>
</dbReference>
<dbReference type="GO" id="GO:0046872">
    <property type="term" value="F:metal ion binding"/>
    <property type="evidence" value="ECO:0007669"/>
    <property type="project" value="UniProtKB-KW"/>
</dbReference>
<dbReference type="GO" id="GO:0004550">
    <property type="term" value="F:nucleoside diphosphate kinase activity"/>
    <property type="evidence" value="ECO:0007669"/>
    <property type="project" value="UniProtKB-UniRule"/>
</dbReference>
<dbReference type="GO" id="GO:0006241">
    <property type="term" value="P:CTP biosynthetic process"/>
    <property type="evidence" value="ECO:0007669"/>
    <property type="project" value="UniProtKB-UniRule"/>
</dbReference>
<dbReference type="GO" id="GO:0006183">
    <property type="term" value="P:GTP biosynthetic process"/>
    <property type="evidence" value="ECO:0007669"/>
    <property type="project" value="UniProtKB-UniRule"/>
</dbReference>
<dbReference type="GO" id="GO:0006228">
    <property type="term" value="P:UTP biosynthetic process"/>
    <property type="evidence" value="ECO:0007669"/>
    <property type="project" value="UniProtKB-UniRule"/>
</dbReference>
<dbReference type="CDD" id="cd04413">
    <property type="entry name" value="NDPk_I"/>
    <property type="match status" value="1"/>
</dbReference>
<dbReference type="FunFam" id="3.30.70.141:FF:000001">
    <property type="entry name" value="Nucleoside diphosphate kinase"/>
    <property type="match status" value="1"/>
</dbReference>
<dbReference type="Gene3D" id="3.30.70.141">
    <property type="entry name" value="Nucleoside diphosphate kinase-like domain"/>
    <property type="match status" value="1"/>
</dbReference>
<dbReference type="HAMAP" id="MF_00451">
    <property type="entry name" value="NDP_kinase"/>
    <property type="match status" value="1"/>
</dbReference>
<dbReference type="InterPro" id="IPR034907">
    <property type="entry name" value="NDK-like_dom"/>
</dbReference>
<dbReference type="InterPro" id="IPR036850">
    <property type="entry name" value="NDK-like_dom_sf"/>
</dbReference>
<dbReference type="InterPro" id="IPR001564">
    <property type="entry name" value="Nucleoside_diP_kinase"/>
</dbReference>
<dbReference type="InterPro" id="IPR023005">
    <property type="entry name" value="Nucleoside_diP_kinase_AS"/>
</dbReference>
<dbReference type="NCBIfam" id="NF001908">
    <property type="entry name" value="PRK00668.1"/>
    <property type="match status" value="1"/>
</dbReference>
<dbReference type="PANTHER" id="PTHR11349">
    <property type="entry name" value="NUCLEOSIDE DIPHOSPHATE KINASE"/>
    <property type="match status" value="1"/>
</dbReference>
<dbReference type="Pfam" id="PF00334">
    <property type="entry name" value="NDK"/>
    <property type="match status" value="1"/>
</dbReference>
<dbReference type="PRINTS" id="PR01243">
    <property type="entry name" value="NUCDPKINASE"/>
</dbReference>
<dbReference type="SMART" id="SM00562">
    <property type="entry name" value="NDK"/>
    <property type="match status" value="1"/>
</dbReference>
<dbReference type="SUPFAM" id="SSF54919">
    <property type="entry name" value="Nucleoside diphosphate kinase, NDK"/>
    <property type="match status" value="1"/>
</dbReference>
<dbReference type="PROSITE" id="PS00469">
    <property type="entry name" value="NDPK"/>
    <property type="match status" value="1"/>
</dbReference>
<dbReference type="PROSITE" id="PS51374">
    <property type="entry name" value="NDPK_LIKE"/>
    <property type="match status" value="1"/>
</dbReference>
<evidence type="ECO:0000255" key="1">
    <source>
        <dbReference type="HAMAP-Rule" id="MF_00451"/>
    </source>
</evidence>
<evidence type="ECO:0000269" key="2">
    <source>
    </source>
</evidence>
<evidence type="ECO:0000269" key="3">
    <source>
    </source>
</evidence>
<evidence type="ECO:0000305" key="4"/>
<evidence type="ECO:0007829" key="5">
    <source>
        <dbReference type="PDB" id="1NHK"/>
    </source>
</evidence>
<comment type="function">
    <text evidence="1">Major role in the synthesis of nucleoside triphosphates other than ATP. The ATP gamma phosphate is transferred to the NDP beta phosphate via a ping-pong mechanism, using a phosphorylated active-site intermediate.</text>
</comment>
<comment type="catalytic activity">
    <reaction evidence="1">
        <text>a 2'-deoxyribonucleoside 5'-diphosphate + ATP = a 2'-deoxyribonucleoside 5'-triphosphate + ADP</text>
        <dbReference type="Rhea" id="RHEA:44640"/>
        <dbReference type="ChEBI" id="CHEBI:30616"/>
        <dbReference type="ChEBI" id="CHEBI:61560"/>
        <dbReference type="ChEBI" id="CHEBI:73316"/>
        <dbReference type="ChEBI" id="CHEBI:456216"/>
        <dbReference type="EC" id="2.7.4.6"/>
    </reaction>
</comment>
<comment type="catalytic activity">
    <reaction evidence="1">
        <text>a ribonucleoside 5'-diphosphate + ATP = a ribonucleoside 5'-triphosphate + ADP</text>
        <dbReference type="Rhea" id="RHEA:18113"/>
        <dbReference type="ChEBI" id="CHEBI:30616"/>
        <dbReference type="ChEBI" id="CHEBI:57930"/>
        <dbReference type="ChEBI" id="CHEBI:61557"/>
        <dbReference type="ChEBI" id="CHEBI:456216"/>
        <dbReference type="EC" id="2.7.4.6"/>
    </reaction>
</comment>
<comment type="cofactor">
    <cofactor evidence="1">
        <name>Mg(2+)</name>
        <dbReference type="ChEBI" id="CHEBI:18420"/>
    </cofactor>
</comment>
<comment type="subunit">
    <text evidence="1 3">Homotetramer.</text>
</comment>
<comment type="subcellular location">
    <subcellularLocation>
        <location evidence="1">Cytoplasm</location>
    </subcellularLocation>
</comment>
<comment type="similarity">
    <text evidence="1 4">Belongs to the NDK family.</text>
</comment>